<keyword id="KW-1185">Reference proteome</keyword>
<keyword id="KW-0687">Ribonucleoprotein</keyword>
<keyword id="KW-0689">Ribosomal protein</keyword>
<reference key="1">
    <citation type="submission" date="2007-08" db="EMBL/GenBank/DDBJ databases">
        <authorList>
            <consortium name="The Citrobacter koseri Genome Sequencing Project"/>
            <person name="McClelland M."/>
            <person name="Sanderson E.K."/>
            <person name="Porwollik S."/>
            <person name="Spieth J."/>
            <person name="Clifton W.S."/>
            <person name="Latreille P."/>
            <person name="Courtney L."/>
            <person name="Wang C."/>
            <person name="Pepin K."/>
            <person name="Bhonagiri V."/>
            <person name="Nash W."/>
            <person name="Johnson M."/>
            <person name="Thiruvilangam P."/>
            <person name="Wilson R."/>
        </authorList>
    </citation>
    <scope>NUCLEOTIDE SEQUENCE [LARGE SCALE GENOMIC DNA]</scope>
    <source>
        <strain>ATCC BAA-895 / CDC 4225-83 / SGSC4696</strain>
    </source>
</reference>
<comment type="subunit">
    <text evidence="1">Part of the 50S ribosomal subunit.</text>
</comment>
<comment type="similarity">
    <text evidence="1">Belongs to the bacterial ribosomal protein bL31 family. Type B subfamily.</text>
</comment>
<accession>A8AJZ0</accession>
<organism>
    <name type="scientific">Citrobacter koseri (strain ATCC BAA-895 / CDC 4225-83 / SGSC4696)</name>
    <dbReference type="NCBI Taxonomy" id="290338"/>
    <lineage>
        <taxon>Bacteria</taxon>
        <taxon>Pseudomonadati</taxon>
        <taxon>Pseudomonadota</taxon>
        <taxon>Gammaproteobacteria</taxon>
        <taxon>Enterobacterales</taxon>
        <taxon>Enterobacteriaceae</taxon>
        <taxon>Citrobacter</taxon>
    </lineage>
</organism>
<dbReference type="EMBL" id="CP000822">
    <property type="protein sequence ID" value="ABV13803.1"/>
    <property type="molecule type" value="Genomic_DNA"/>
</dbReference>
<dbReference type="RefSeq" id="WP_012133519.1">
    <property type="nucleotide sequence ID" value="NC_009792.1"/>
</dbReference>
<dbReference type="SMR" id="A8AJZ0"/>
<dbReference type="STRING" id="290338.CKO_02696"/>
<dbReference type="GeneID" id="45136553"/>
<dbReference type="KEGG" id="cko:CKO_02696"/>
<dbReference type="HOGENOM" id="CLU_114306_2_1_6"/>
<dbReference type="OrthoDB" id="9803251at2"/>
<dbReference type="Proteomes" id="UP000008148">
    <property type="component" value="Chromosome"/>
</dbReference>
<dbReference type="GO" id="GO:1990904">
    <property type="term" value="C:ribonucleoprotein complex"/>
    <property type="evidence" value="ECO:0007669"/>
    <property type="project" value="UniProtKB-KW"/>
</dbReference>
<dbReference type="GO" id="GO:0005840">
    <property type="term" value="C:ribosome"/>
    <property type="evidence" value="ECO:0007669"/>
    <property type="project" value="UniProtKB-KW"/>
</dbReference>
<dbReference type="GO" id="GO:0003735">
    <property type="term" value="F:structural constituent of ribosome"/>
    <property type="evidence" value="ECO:0007669"/>
    <property type="project" value="InterPro"/>
</dbReference>
<dbReference type="GO" id="GO:0006412">
    <property type="term" value="P:translation"/>
    <property type="evidence" value="ECO:0007669"/>
    <property type="project" value="UniProtKB-UniRule"/>
</dbReference>
<dbReference type="Gene3D" id="4.10.830.30">
    <property type="entry name" value="Ribosomal protein L31"/>
    <property type="match status" value="1"/>
</dbReference>
<dbReference type="HAMAP" id="MF_00502">
    <property type="entry name" value="Ribosomal_bL31_2"/>
    <property type="match status" value="1"/>
</dbReference>
<dbReference type="InterPro" id="IPR034704">
    <property type="entry name" value="Ribosomal_bL28/bL31-like_sf"/>
</dbReference>
<dbReference type="InterPro" id="IPR002150">
    <property type="entry name" value="Ribosomal_bL31"/>
</dbReference>
<dbReference type="InterPro" id="IPR027493">
    <property type="entry name" value="Ribosomal_bL31_B"/>
</dbReference>
<dbReference type="InterPro" id="IPR042105">
    <property type="entry name" value="Ribosomal_bL31_sf"/>
</dbReference>
<dbReference type="NCBIfam" id="TIGR00105">
    <property type="entry name" value="L31"/>
    <property type="match status" value="1"/>
</dbReference>
<dbReference type="NCBIfam" id="NF002462">
    <property type="entry name" value="PRK01678.1"/>
    <property type="match status" value="1"/>
</dbReference>
<dbReference type="PANTHER" id="PTHR33280">
    <property type="entry name" value="50S RIBOSOMAL PROTEIN L31, CHLOROPLASTIC"/>
    <property type="match status" value="1"/>
</dbReference>
<dbReference type="PANTHER" id="PTHR33280:SF1">
    <property type="entry name" value="LARGE RIBOSOMAL SUBUNIT PROTEIN BL31C"/>
    <property type="match status" value="1"/>
</dbReference>
<dbReference type="Pfam" id="PF01197">
    <property type="entry name" value="Ribosomal_L31"/>
    <property type="match status" value="1"/>
</dbReference>
<dbReference type="PRINTS" id="PR01249">
    <property type="entry name" value="RIBOSOMALL31"/>
</dbReference>
<dbReference type="SUPFAM" id="SSF143800">
    <property type="entry name" value="L28p-like"/>
    <property type="match status" value="1"/>
</dbReference>
<proteinExistence type="inferred from homology"/>
<feature type="chain" id="PRO_1000014694" description="Large ribosomal subunit protein bL31B">
    <location>
        <begin position="1"/>
        <end position="86"/>
    </location>
</feature>
<sequence length="86" mass="9824">MKPNIHPAYRTVVFHDTSANEYFKVGSTIKTEREIELEGVTYPYVTIEVSSKSHPYYTGKQKTFDNEGSAARFQKRFGNFIGAKRG</sequence>
<gene>
    <name evidence="1" type="primary">rpmE2</name>
    <name type="ordered locus">CKO_02696</name>
</gene>
<name>RL31B_CITK8</name>
<evidence type="ECO:0000255" key="1">
    <source>
        <dbReference type="HAMAP-Rule" id="MF_00502"/>
    </source>
</evidence>
<evidence type="ECO:0000305" key="2"/>
<protein>
    <recommendedName>
        <fullName evidence="1">Large ribosomal subunit protein bL31B</fullName>
    </recommendedName>
    <alternativeName>
        <fullName evidence="2">50S ribosomal protein L31 type B</fullName>
    </alternativeName>
</protein>